<name>PEPT_CLOBM</name>
<reference key="1">
    <citation type="journal article" date="2007" name="PLoS ONE">
        <title>Analysis of the neurotoxin complex genes in Clostridium botulinum A1-A4 and B1 strains: BoNT/A3, /Ba4 and /B1 clusters are located within plasmids.</title>
        <authorList>
            <person name="Smith T.J."/>
            <person name="Hill K.K."/>
            <person name="Foley B.T."/>
            <person name="Detter J.C."/>
            <person name="Munk A.C."/>
            <person name="Bruce D.C."/>
            <person name="Doggett N.A."/>
            <person name="Smith L.A."/>
            <person name="Marks J.D."/>
            <person name="Xie G."/>
            <person name="Brettin T.S."/>
        </authorList>
    </citation>
    <scope>NUCLEOTIDE SEQUENCE [LARGE SCALE GENOMIC DNA]</scope>
    <source>
        <strain>Loch Maree / Type A3</strain>
    </source>
</reference>
<sequence>MKDVLERFLGYIKVDTQSSEESDTVPTTKTQLEFAKKLGEELKAIGLKDVSVDENGYVMATLESNIDKKVPTIGFIAHMDTSPDLSGTNINPRIVEKYDGQDIVLNKEKNIILKINEFPEILEYKGQDIVVTDGNTLLGADDKAGIAEIITAVEYLINHPEIKHGTIKVGFTPDEEVGKGADHFDVKKFGADLAYTLDGGGIGELECETFNAAKAKVIIEGRNVHPGSAKNKMTNAVLVANKFINMLPENEVPERTEGYEGFFHLLSVKSEVETAELNYIIRDFDRKKFEERKEQIKEVGKKINEKYNKEIVCVKVEDQYYNMKEKIDEVKYVVDIAHDAMKAIDIEPILVPIRGGTDGSRLSFMGLPTPNLFAGGHNFHGRFEFVPVLSMEKAAELVVKIAELYANR</sequence>
<dbReference type="EC" id="3.4.11.4" evidence="1"/>
<dbReference type="EMBL" id="CP000962">
    <property type="protein sequence ID" value="ACA55473.1"/>
    <property type="molecule type" value="Genomic_DNA"/>
</dbReference>
<dbReference type="RefSeq" id="WP_012343448.1">
    <property type="nucleotide sequence ID" value="NC_010520.1"/>
</dbReference>
<dbReference type="SMR" id="B1KV00"/>
<dbReference type="MEROPS" id="M20.003"/>
<dbReference type="KEGG" id="cbl:CLK_3640"/>
<dbReference type="HOGENOM" id="CLU_053676_0_0_9"/>
<dbReference type="GO" id="GO:0005829">
    <property type="term" value="C:cytosol"/>
    <property type="evidence" value="ECO:0007669"/>
    <property type="project" value="TreeGrafter"/>
</dbReference>
<dbReference type="GO" id="GO:0008237">
    <property type="term" value="F:metallopeptidase activity"/>
    <property type="evidence" value="ECO:0007669"/>
    <property type="project" value="UniProtKB-KW"/>
</dbReference>
<dbReference type="GO" id="GO:0045148">
    <property type="term" value="F:tripeptide aminopeptidase activity"/>
    <property type="evidence" value="ECO:0007669"/>
    <property type="project" value="UniProtKB-UniRule"/>
</dbReference>
<dbReference type="GO" id="GO:0008270">
    <property type="term" value="F:zinc ion binding"/>
    <property type="evidence" value="ECO:0007669"/>
    <property type="project" value="UniProtKB-UniRule"/>
</dbReference>
<dbReference type="GO" id="GO:0043171">
    <property type="term" value="P:peptide catabolic process"/>
    <property type="evidence" value="ECO:0007669"/>
    <property type="project" value="UniProtKB-UniRule"/>
</dbReference>
<dbReference type="GO" id="GO:0006508">
    <property type="term" value="P:proteolysis"/>
    <property type="evidence" value="ECO:0007669"/>
    <property type="project" value="UniProtKB-UniRule"/>
</dbReference>
<dbReference type="CDD" id="cd03892">
    <property type="entry name" value="M20_peptT"/>
    <property type="match status" value="1"/>
</dbReference>
<dbReference type="FunFam" id="3.30.70.360:FF:000002">
    <property type="entry name" value="Peptidase T"/>
    <property type="match status" value="1"/>
</dbReference>
<dbReference type="Gene3D" id="3.30.70.360">
    <property type="match status" value="1"/>
</dbReference>
<dbReference type="Gene3D" id="3.40.630.10">
    <property type="entry name" value="Zn peptidases"/>
    <property type="match status" value="1"/>
</dbReference>
<dbReference type="HAMAP" id="MF_00550">
    <property type="entry name" value="Aminopeptidase_M20"/>
    <property type="match status" value="1"/>
</dbReference>
<dbReference type="InterPro" id="IPR001261">
    <property type="entry name" value="ArgE/DapE_CS"/>
</dbReference>
<dbReference type="InterPro" id="IPR036264">
    <property type="entry name" value="Bact_exopeptidase_dim_dom"/>
</dbReference>
<dbReference type="InterPro" id="IPR002933">
    <property type="entry name" value="Peptidase_M20"/>
</dbReference>
<dbReference type="InterPro" id="IPR011650">
    <property type="entry name" value="Peptidase_M20_dimer"/>
</dbReference>
<dbReference type="InterPro" id="IPR010161">
    <property type="entry name" value="Peptidase_M20B"/>
</dbReference>
<dbReference type="NCBIfam" id="TIGR01882">
    <property type="entry name" value="peptidase-T"/>
    <property type="match status" value="1"/>
</dbReference>
<dbReference type="NCBIfam" id="NF003976">
    <property type="entry name" value="PRK05469.1"/>
    <property type="match status" value="1"/>
</dbReference>
<dbReference type="NCBIfam" id="NF009920">
    <property type="entry name" value="PRK13381.1"/>
    <property type="match status" value="1"/>
</dbReference>
<dbReference type="PANTHER" id="PTHR42994">
    <property type="entry name" value="PEPTIDASE T"/>
    <property type="match status" value="1"/>
</dbReference>
<dbReference type="PANTHER" id="PTHR42994:SF1">
    <property type="entry name" value="PEPTIDASE T"/>
    <property type="match status" value="1"/>
</dbReference>
<dbReference type="Pfam" id="PF07687">
    <property type="entry name" value="M20_dimer"/>
    <property type="match status" value="1"/>
</dbReference>
<dbReference type="Pfam" id="PF01546">
    <property type="entry name" value="Peptidase_M20"/>
    <property type="match status" value="1"/>
</dbReference>
<dbReference type="PIRSF" id="PIRSF037215">
    <property type="entry name" value="Peptidase_M20B"/>
    <property type="match status" value="1"/>
</dbReference>
<dbReference type="SUPFAM" id="SSF55031">
    <property type="entry name" value="Bacterial exopeptidase dimerisation domain"/>
    <property type="match status" value="1"/>
</dbReference>
<dbReference type="SUPFAM" id="SSF53187">
    <property type="entry name" value="Zn-dependent exopeptidases"/>
    <property type="match status" value="1"/>
</dbReference>
<dbReference type="PROSITE" id="PS00758">
    <property type="entry name" value="ARGE_DAPE_CPG2_1"/>
    <property type="match status" value="1"/>
</dbReference>
<dbReference type="PROSITE" id="PS00759">
    <property type="entry name" value="ARGE_DAPE_CPG2_2"/>
    <property type="match status" value="1"/>
</dbReference>
<organism>
    <name type="scientific">Clostridium botulinum (strain Loch Maree / Type A3)</name>
    <dbReference type="NCBI Taxonomy" id="498214"/>
    <lineage>
        <taxon>Bacteria</taxon>
        <taxon>Bacillati</taxon>
        <taxon>Bacillota</taxon>
        <taxon>Clostridia</taxon>
        <taxon>Eubacteriales</taxon>
        <taxon>Clostridiaceae</taxon>
        <taxon>Clostridium</taxon>
    </lineage>
</organism>
<comment type="function">
    <text evidence="1">Cleaves the N-terminal amino acid of tripeptides.</text>
</comment>
<comment type="catalytic activity">
    <reaction evidence="1">
        <text>Release of the N-terminal residue from a tripeptide.</text>
        <dbReference type="EC" id="3.4.11.4"/>
    </reaction>
</comment>
<comment type="cofactor">
    <cofactor evidence="1">
        <name>Zn(2+)</name>
        <dbReference type="ChEBI" id="CHEBI:29105"/>
    </cofactor>
    <text evidence="1">Binds 2 Zn(2+) ions per subunit.</text>
</comment>
<comment type="subcellular location">
    <subcellularLocation>
        <location evidence="1">Cytoplasm</location>
    </subcellularLocation>
</comment>
<comment type="similarity">
    <text evidence="1">Belongs to the peptidase M20B family.</text>
</comment>
<evidence type="ECO:0000255" key="1">
    <source>
        <dbReference type="HAMAP-Rule" id="MF_00550"/>
    </source>
</evidence>
<proteinExistence type="inferred from homology"/>
<keyword id="KW-0031">Aminopeptidase</keyword>
<keyword id="KW-0963">Cytoplasm</keyword>
<keyword id="KW-0378">Hydrolase</keyword>
<keyword id="KW-0479">Metal-binding</keyword>
<keyword id="KW-0482">Metalloprotease</keyword>
<keyword id="KW-0645">Protease</keyword>
<keyword id="KW-0862">Zinc</keyword>
<protein>
    <recommendedName>
        <fullName evidence="1">Peptidase T</fullName>
        <ecNumber evidence="1">3.4.11.4</ecNumber>
    </recommendedName>
    <alternativeName>
        <fullName evidence="1">Aminotripeptidase</fullName>
        <shortName evidence="1">Tripeptidase</shortName>
    </alternativeName>
    <alternativeName>
        <fullName evidence="1">Tripeptide aminopeptidase</fullName>
    </alternativeName>
</protein>
<accession>B1KV00</accession>
<gene>
    <name evidence="1" type="primary">pepT</name>
    <name type="ordered locus">CLK_3640</name>
</gene>
<feature type="chain" id="PRO_1000129026" description="Peptidase T">
    <location>
        <begin position="1"/>
        <end position="408"/>
    </location>
</feature>
<feature type="active site" evidence="1">
    <location>
        <position position="80"/>
    </location>
</feature>
<feature type="active site" description="Proton acceptor" evidence="1">
    <location>
        <position position="175"/>
    </location>
</feature>
<feature type="binding site" evidence="1">
    <location>
        <position position="78"/>
    </location>
    <ligand>
        <name>Zn(2+)</name>
        <dbReference type="ChEBI" id="CHEBI:29105"/>
        <label>1</label>
    </ligand>
</feature>
<feature type="binding site" evidence="1">
    <location>
        <position position="141"/>
    </location>
    <ligand>
        <name>Zn(2+)</name>
        <dbReference type="ChEBI" id="CHEBI:29105"/>
        <label>1</label>
    </ligand>
</feature>
<feature type="binding site" evidence="1">
    <location>
        <position position="141"/>
    </location>
    <ligand>
        <name>Zn(2+)</name>
        <dbReference type="ChEBI" id="CHEBI:29105"/>
        <label>2</label>
    </ligand>
</feature>
<feature type="binding site" evidence="1">
    <location>
        <position position="176"/>
    </location>
    <ligand>
        <name>Zn(2+)</name>
        <dbReference type="ChEBI" id="CHEBI:29105"/>
        <label>2</label>
    </ligand>
</feature>
<feature type="binding site" evidence="1">
    <location>
        <position position="198"/>
    </location>
    <ligand>
        <name>Zn(2+)</name>
        <dbReference type="ChEBI" id="CHEBI:29105"/>
        <label>1</label>
    </ligand>
</feature>
<feature type="binding site" evidence="1">
    <location>
        <position position="380"/>
    </location>
    <ligand>
        <name>Zn(2+)</name>
        <dbReference type="ChEBI" id="CHEBI:29105"/>
        <label>2</label>
    </ligand>
</feature>